<accession>B0BX71</accession>
<feature type="chain" id="PRO_0000357914" description="NADH-quinone oxidoreductase subunit D">
    <location>
        <begin position="1"/>
        <end position="391"/>
    </location>
</feature>
<evidence type="ECO:0000255" key="1">
    <source>
        <dbReference type="HAMAP-Rule" id="MF_01358"/>
    </source>
</evidence>
<evidence type="ECO:0000305" key="2"/>
<proteinExistence type="inferred from homology"/>
<comment type="function">
    <text evidence="1">NDH-1 shuttles electrons from NADH, via FMN and iron-sulfur (Fe-S) centers, to quinones in the respiratory chain. The immediate electron acceptor for the enzyme in this species is believed to be ubiquinone. Couples the redox reaction to proton translocation (for every two electrons transferred, four hydrogen ions are translocated across the cytoplasmic membrane), and thus conserves the redox energy in a proton gradient.</text>
</comment>
<comment type="catalytic activity">
    <reaction evidence="1">
        <text>a quinone + NADH + 5 H(+)(in) = a quinol + NAD(+) + 4 H(+)(out)</text>
        <dbReference type="Rhea" id="RHEA:57888"/>
        <dbReference type="ChEBI" id="CHEBI:15378"/>
        <dbReference type="ChEBI" id="CHEBI:24646"/>
        <dbReference type="ChEBI" id="CHEBI:57540"/>
        <dbReference type="ChEBI" id="CHEBI:57945"/>
        <dbReference type="ChEBI" id="CHEBI:132124"/>
    </reaction>
</comment>
<comment type="subunit">
    <text evidence="1">NDH-1 is composed of 14 different subunits. Subunits NuoB, C, D, E, F, and G constitute the peripheral sector of the complex.</text>
</comment>
<comment type="subcellular location">
    <subcellularLocation>
        <location evidence="1">Cell inner membrane</location>
        <topology evidence="1">Peripheral membrane protein</topology>
        <orientation evidence="1">Cytoplasmic side</orientation>
    </subcellularLocation>
</comment>
<comment type="similarity">
    <text evidence="1">Belongs to the complex I 49 kDa subunit family.</text>
</comment>
<comment type="sequence caution" evidence="2">
    <conflict type="erroneous initiation">
        <sequence resource="EMBL-CDS" id="ABY72447"/>
    </conflict>
</comment>
<gene>
    <name evidence="1" type="primary">nuoD</name>
    <name type="ordered locus">RrIowa_0576</name>
</gene>
<keyword id="KW-0997">Cell inner membrane</keyword>
<keyword id="KW-1003">Cell membrane</keyword>
<keyword id="KW-0472">Membrane</keyword>
<keyword id="KW-0520">NAD</keyword>
<keyword id="KW-0874">Quinone</keyword>
<keyword id="KW-1278">Translocase</keyword>
<keyword id="KW-0813">Transport</keyword>
<keyword id="KW-0830">Ubiquinone</keyword>
<protein>
    <recommendedName>
        <fullName evidence="1">NADH-quinone oxidoreductase subunit D</fullName>
        <ecNumber evidence="1">7.1.1.-</ecNumber>
    </recommendedName>
    <alternativeName>
        <fullName evidence="1">NADH dehydrogenase I subunit D</fullName>
    </alternativeName>
    <alternativeName>
        <fullName evidence="1">NDH-1 subunit D</fullName>
    </alternativeName>
</protein>
<organism>
    <name type="scientific">Rickettsia rickettsii (strain Iowa)</name>
    <dbReference type="NCBI Taxonomy" id="452659"/>
    <lineage>
        <taxon>Bacteria</taxon>
        <taxon>Pseudomonadati</taxon>
        <taxon>Pseudomonadota</taxon>
        <taxon>Alphaproteobacteria</taxon>
        <taxon>Rickettsiales</taxon>
        <taxon>Rickettsiaceae</taxon>
        <taxon>Rickettsieae</taxon>
        <taxon>Rickettsia</taxon>
        <taxon>spotted fever group</taxon>
    </lineage>
</organism>
<name>NUOD_RICRO</name>
<dbReference type="EC" id="7.1.1.-" evidence="1"/>
<dbReference type="EMBL" id="CP000766">
    <property type="protein sequence ID" value="ABY72447.1"/>
    <property type="status" value="ALT_INIT"/>
    <property type="molecule type" value="Genomic_DNA"/>
</dbReference>
<dbReference type="RefSeq" id="WP_014362466.1">
    <property type="nucleotide sequence ID" value="NC_010263.3"/>
</dbReference>
<dbReference type="SMR" id="B0BX71"/>
<dbReference type="KEGG" id="rrj:RrIowa_0576"/>
<dbReference type="eggNOG" id="COG0649">
    <property type="taxonomic scope" value="Bacteria"/>
</dbReference>
<dbReference type="HOGENOM" id="CLU_015134_1_2_5"/>
<dbReference type="Proteomes" id="UP000000796">
    <property type="component" value="Chromosome"/>
</dbReference>
<dbReference type="GO" id="GO:0005886">
    <property type="term" value="C:plasma membrane"/>
    <property type="evidence" value="ECO:0007669"/>
    <property type="project" value="UniProtKB-SubCell"/>
</dbReference>
<dbReference type="GO" id="GO:0051287">
    <property type="term" value="F:NAD binding"/>
    <property type="evidence" value="ECO:0007669"/>
    <property type="project" value="InterPro"/>
</dbReference>
<dbReference type="GO" id="GO:0050136">
    <property type="term" value="F:NADH:ubiquinone reductase (non-electrogenic) activity"/>
    <property type="evidence" value="ECO:0007669"/>
    <property type="project" value="UniProtKB-UniRule"/>
</dbReference>
<dbReference type="GO" id="GO:0048038">
    <property type="term" value="F:quinone binding"/>
    <property type="evidence" value="ECO:0007669"/>
    <property type="project" value="UniProtKB-KW"/>
</dbReference>
<dbReference type="FunFam" id="1.10.645.10:FF:000005">
    <property type="entry name" value="NADH-quinone oxidoreductase subunit D"/>
    <property type="match status" value="1"/>
</dbReference>
<dbReference type="Gene3D" id="1.10.645.10">
    <property type="entry name" value="Cytochrome-c3 Hydrogenase, chain B"/>
    <property type="match status" value="1"/>
</dbReference>
<dbReference type="HAMAP" id="MF_01358">
    <property type="entry name" value="NDH1_NuoD"/>
    <property type="match status" value="1"/>
</dbReference>
<dbReference type="InterPro" id="IPR001135">
    <property type="entry name" value="NADH_Q_OxRdtase_suD"/>
</dbReference>
<dbReference type="InterPro" id="IPR014029">
    <property type="entry name" value="NADH_UbQ_OxRdtase_49kDa_CS"/>
</dbReference>
<dbReference type="InterPro" id="IPR022885">
    <property type="entry name" value="NDH1_su_D/H"/>
</dbReference>
<dbReference type="InterPro" id="IPR029014">
    <property type="entry name" value="NiFe-Hase_large"/>
</dbReference>
<dbReference type="NCBIfam" id="TIGR01962">
    <property type="entry name" value="NuoD"/>
    <property type="match status" value="1"/>
</dbReference>
<dbReference type="NCBIfam" id="NF004739">
    <property type="entry name" value="PRK06075.1"/>
    <property type="match status" value="1"/>
</dbReference>
<dbReference type="PANTHER" id="PTHR11993:SF10">
    <property type="entry name" value="NADH DEHYDROGENASE [UBIQUINONE] IRON-SULFUR PROTEIN 2, MITOCHONDRIAL"/>
    <property type="match status" value="1"/>
</dbReference>
<dbReference type="PANTHER" id="PTHR11993">
    <property type="entry name" value="NADH-UBIQUINONE OXIDOREDUCTASE 49 KDA SUBUNIT"/>
    <property type="match status" value="1"/>
</dbReference>
<dbReference type="Pfam" id="PF00346">
    <property type="entry name" value="Complex1_49kDa"/>
    <property type="match status" value="1"/>
</dbReference>
<dbReference type="SUPFAM" id="SSF56762">
    <property type="entry name" value="HydB/Nqo4-like"/>
    <property type="match status" value="1"/>
</dbReference>
<dbReference type="PROSITE" id="PS00535">
    <property type="entry name" value="COMPLEX1_49K"/>
    <property type="match status" value="1"/>
</dbReference>
<reference key="1">
    <citation type="journal article" date="2008" name="Infect. Immun.">
        <title>Genomic comparison of virulent Rickettsia rickettsii Sheila Smith and avirulent Rickettsia rickettsii Iowa.</title>
        <authorList>
            <person name="Ellison D.W."/>
            <person name="Clark T.R."/>
            <person name="Sturdevant D.E."/>
            <person name="Virtaneva K."/>
            <person name="Porcella S.F."/>
            <person name="Hackstadt T."/>
        </authorList>
    </citation>
    <scope>NUCLEOTIDE SEQUENCE [LARGE SCALE GENOMIC DNA]</scope>
    <source>
        <strain>Iowa</strain>
    </source>
</reference>
<sequence>MTNNTKTITLNLGPQHPATHGVLRLILEMDGEVVNNADPHIGLLHRGTEKLIEHKTYLQAIPYFDRLDYVSPMCQEHAFALAVESLLECEVPRRAQFIRVLFSELTRILNHTLNIGSQALDIGATTPLLWLFEEREKIMEFYEHVSGSRMHSNYFRPGGVVADLPEGLLEDIDKFIEQFPPKLHDIESLLNENRLWKQRLVDIGVVSQKEAMDWGFSGPMLRGSGIAWDLRKSNPYDVYDEMDFKVPIGKNGDCYDRYFVRMLEMYESIKIIKQCIEKMPKGAIKTDDPKLTPPTRAKMKESMEAMIHHFKLYTEGYDVPAGETYKAVEAPKGEFGVYLYSRGGNRPYRCRIKAPGFAHLQGLDFMSQGHLMADVITIIATLDIVFGEIDR</sequence>